<sequence length="525" mass="58696">MVKEELSEFEKQRLANIAERDALLKKLSLDAQSTGVFTSNMPRGTSANQSKPKKKPAPKVKKEESLLPRRTSSRLRGIAADSEIAKRKADEEYDRRQEEERAKRVRKSDSFSFNDIFVSGQKLSGDALIGVDVVTKGVAVPYQRTFGEEDIKSTDDKDLKALRKEMNSLSLWEAWEPNRIKITPERIYSMTFHPSEAKPVIFAGDKMGHLGILDASQEKPTSAVKNEDDEDDEDDDDPDPVLVTLKPHTRTISSMTVHPSKPTHLYTASYDSSIRELDLEKTSSVEKYAPESTSDDVPISGLDMAAGDPNTIYWTTLDGAFGRYDMRTKRQSSATTWQLSEKKIGGFSLYQTHPHYVATASLDRTMRLWDIRNLSHTDPTPVGEHQSRLSVSHAAFNCVGQIATSSYDDTLKLYDFSSKGISSWKPGHILDESEMKPDTIVRHNCQTGRWVTILRPQWQLNPQSAIQRFCIGNMNRFVDIYSGSGDQLAQLGGDGITAVPAVAVFHRSKNWVAGGTASGKICLWM</sequence>
<gene>
    <name type="ORF">AN3737</name>
</gene>
<dbReference type="EMBL" id="AACD01000061">
    <property type="protein sequence ID" value="EAA59945.1"/>
    <property type="molecule type" value="Genomic_DNA"/>
</dbReference>
<dbReference type="EMBL" id="BN001302">
    <property type="protein sequence ID" value="CBF75499.1"/>
    <property type="molecule type" value="Genomic_DNA"/>
</dbReference>
<dbReference type="RefSeq" id="XP_661341.1">
    <property type="nucleotide sequence ID" value="XM_656249.1"/>
</dbReference>
<dbReference type="SMR" id="Q5B6U3"/>
<dbReference type="FunCoup" id="Q5B6U3">
    <property type="interactions" value="670"/>
</dbReference>
<dbReference type="STRING" id="227321.Q5B6U3"/>
<dbReference type="EnsemblFungi" id="CBF75499">
    <property type="protein sequence ID" value="CBF75499"/>
    <property type="gene ID" value="ANIA_03737"/>
</dbReference>
<dbReference type="KEGG" id="ani:ANIA_03737"/>
<dbReference type="VEuPathDB" id="FungiDB:AN3737"/>
<dbReference type="eggNOG" id="KOG4328">
    <property type="taxonomic scope" value="Eukaryota"/>
</dbReference>
<dbReference type="HOGENOM" id="CLU_017019_1_1_1"/>
<dbReference type="InParanoid" id="Q5B6U3"/>
<dbReference type="OMA" id="DPNTLYW"/>
<dbReference type="OrthoDB" id="9890280at2759"/>
<dbReference type="Proteomes" id="UP000000560">
    <property type="component" value="Chromosome II"/>
</dbReference>
<dbReference type="GO" id="GO:0000785">
    <property type="term" value="C:chromatin"/>
    <property type="evidence" value="ECO:0007669"/>
    <property type="project" value="EnsemblFungi"/>
</dbReference>
<dbReference type="GO" id="GO:0005737">
    <property type="term" value="C:cytoplasm"/>
    <property type="evidence" value="ECO:0007669"/>
    <property type="project" value="EnsemblFungi"/>
</dbReference>
<dbReference type="GO" id="GO:0034399">
    <property type="term" value="C:nuclear periphery"/>
    <property type="evidence" value="ECO:0007669"/>
    <property type="project" value="EnsemblFungi"/>
</dbReference>
<dbReference type="GO" id="GO:0005634">
    <property type="term" value="C:nucleus"/>
    <property type="evidence" value="ECO:0000318"/>
    <property type="project" value="GO_Central"/>
</dbReference>
<dbReference type="GO" id="GO:0003677">
    <property type="term" value="F:DNA binding"/>
    <property type="evidence" value="ECO:0000318"/>
    <property type="project" value="GO_Central"/>
</dbReference>
<dbReference type="GO" id="GO:0006974">
    <property type="term" value="P:DNA damage response"/>
    <property type="evidence" value="ECO:0007669"/>
    <property type="project" value="UniProtKB-KW"/>
</dbReference>
<dbReference type="GO" id="GO:2000001">
    <property type="term" value="P:regulation of DNA damage checkpoint"/>
    <property type="evidence" value="ECO:0000318"/>
    <property type="project" value="GO_Central"/>
</dbReference>
<dbReference type="FunFam" id="2.130.10.10:FF:000562">
    <property type="entry name" value="DNA damage-binding protein CMR1"/>
    <property type="match status" value="1"/>
</dbReference>
<dbReference type="Gene3D" id="2.130.10.10">
    <property type="entry name" value="YVTN repeat-like/Quinoprotein amine dehydrogenase"/>
    <property type="match status" value="1"/>
</dbReference>
<dbReference type="InterPro" id="IPR015943">
    <property type="entry name" value="WD40/YVTN_repeat-like_dom_sf"/>
</dbReference>
<dbReference type="InterPro" id="IPR036322">
    <property type="entry name" value="WD40_repeat_dom_sf"/>
</dbReference>
<dbReference type="InterPro" id="IPR001680">
    <property type="entry name" value="WD40_rpt"/>
</dbReference>
<dbReference type="InterPro" id="IPR050853">
    <property type="entry name" value="WD_repeat_DNA-damage-binding"/>
</dbReference>
<dbReference type="PANTHER" id="PTHR14773">
    <property type="entry name" value="WD REPEAT-CONTAINING PROTEIN 76"/>
    <property type="match status" value="1"/>
</dbReference>
<dbReference type="PANTHER" id="PTHR14773:SF0">
    <property type="entry name" value="WD REPEAT-CONTAINING PROTEIN 76"/>
    <property type="match status" value="1"/>
</dbReference>
<dbReference type="Pfam" id="PF00400">
    <property type="entry name" value="WD40"/>
    <property type="match status" value="2"/>
</dbReference>
<dbReference type="SMART" id="SM00320">
    <property type="entry name" value="WD40"/>
    <property type="match status" value="4"/>
</dbReference>
<dbReference type="SUPFAM" id="SSF50978">
    <property type="entry name" value="WD40 repeat-like"/>
    <property type="match status" value="1"/>
</dbReference>
<dbReference type="PROSITE" id="PS00678">
    <property type="entry name" value="WD_REPEATS_1"/>
    <property type="match status" value="1"/>
</dbReference>
<dbReference type="PROSITE" id="PS50082">
    <property type="entry name" value="WD_REPEATS_2"/>
    <property type="match status" value="1"/>
</dbReference>
<dbReference type="PROSITE" id="PS50294">
    <property type="entry name" value="WD_REPEATS_REGION"/>
    <property type="match status" value="1"/>
</dbReference>
<reference key="1">
    <citation type="journal article" date="2005" name="Nature">
        <title>Sequencing of Aspergillus nidulans and comparative analysis with A. fumigatus and A. oryzae.</title>
        <authorList>
            <person name="Galagan J.E."/>
            <person name="Calvo S.E."/>
            <person name="Cuomo C."/>
            <person name="Ma L.-J."/>
            <person name="Wortman J.R."/>
            <person name="Batzoglou S."/>
            <person name="Lee S.-I."/>
            <person name="Bastuerkmen M."/>
            <person name="Spevak C.C."/>
            <person name="Clutterbuck J."/>
            <person name="Kapitonov V."/>
            <person name="Jurka J."/>
            <person name="Scazzocchio C."/>
            <person name="Farman M.L."/>
            <person name="Butler J."/>
            <person name="Purcell S."/>
            <person name="Harris S."/>
            <person name="Braus G.H."/>
            <person name="Draht O."/>
            <person name="Busch S."/>
            <person name="D'Enfert C."/>
            <person name="Bouchier C."/>
            <person name="Goldman G.H."/>
            <person name="Bell-Pedersen D."/>
            <person name="Griffiths-Jones S."/>
            <person name="Doonan J.H."/>
            <person name="Yu J."/>
            <person name="Vienken K."/>
            <person name="Pain A."/>
            <person name="Freitag M."/>
            <person name="Selker E.U."/>
            <person name="Archer D.B."/>
            <person name="Penalva M.A."/>
            <person name="Oakley B.R."/>
            <person name="Momany M."/>
            <person name="Tanaka T."/>
            <person name="Kumagai T."/>
            <person name="Asai K."/>
            <person name="Machida M."/>
            <person name="Nierman W.C."/>
            <person name="Denning D.W."/>
            <person name="Caddick M.X."/>
            <person name="Hynes M."/>
            <person name="Paoletti M."/>
            <person name="Fischer R."/>
            <person name="Miller B.L."/>
            <person name="Dyer P.S."/>
            <person name="Sachs M.S."/>
            <person name="Osmani S.A."/>
            <person name="Birren B.W."/>
        </authorList>
    </citation>
    <scope>NUCLEOTIDE SEQUENCE [LARGE SCALE GENOMIC DNA]</scope>
    <source>
        <strain>FGSC A4 / ATCC 38163 / CBS 112.46 / NRRL 194 / M139</strain>
    </source>
</reference>
<reference key="2">
    <citation type="journal article" date="2009" name="Fungal Genet. Biol.">
        <title>The 2008 update of the Aspergillus nidulans genome annotation: a community effort.</title>
        <authorList>
            <person name="Wortman J.R."/>
            <person name="Gilsenan J.M."/>
            <person name="Joardar V."/>
            <person name="Deegan J."/>
            <person name="Clutterbuck J."/>
            <person name="Andersen M.R."/>
            <person name="Archer D."/>
            <person name="Bencina M."/>
            <person name="Braus G."/>
            <person name="Coutinho P."/>
            <person name="von Dohren H."/>
            <person name="Doonan J."/>
            <person name="Driessen A.J."/>
            <person name="Durek P."/>
            <person name="Espeso E."/>
            <person name="Fekete E."/>
            <person name="Flipphi M."/>
            <person name="Estrada C.G."/>
            <person name="Geysens S."/>
            <person name="Goldman G."/>
            <person name="de Groot P.W."/>
            <person name="Hansen K."/>
            <person name="Harris S.D."/>
            <person name="Heinekamp T."/>
            <person name="Helmstaedt K."/>
            <person name="Henrissat B."/>
            <person name="Hofmann G."/>
            <person name="Homan T."/>
            <person name="Horio T."/>
            <person name="Horiuchi H."/>
            <person name="James S."/>
            <person name="Jones M."/>
            <person name="Karaffa L."/>
            <person name="Karanyi Z."/>
            <person name="Kato M."/>
            <person name="Keller N."/>
            <person name="Kelly D.E."/>
            <person name="Kiel J.A."/>
            <person name="Kim J.M."/>
            <person name="van der Klei I.J."/>
            <person name="Klis F.M."/>
            <person name="Kovalchuk A."/>
            <person name="Krasevec N."/>
            <person name="Kubicek C.P."/>
            <person name="Liu B."/>
            <person name="Maccabe A."/>
            <person name="Meyer V."/>
            <person name="Mirabito P."/>
            <person name="Miskei M."/>
            <person name="Mos M."/>
            <person name="Mullins J."/>
            <person name="Nelson D.R."/>
            <person name="Nielsen J."/>
            <person name="Oakley B.R."/>
            <person name="Osmani S.A."/>
            <person name="Pakula T."/>
            <person name="Paszewski A."/>
            <person name="Paulsen I."/>
            <person name="Pilsyk S."/>
            <person name="Pocsi I."/>
            <person name="Punt P.J."/>
            <person name="Ram A.F."/>
            <person name="Ren Q."/>
            <person name="Robellet X."/>
            <person name="Robson G."/>
            <person name="Seiboth B."/>
            <person name="van Solingen P."/>
            <person name="Specht T."/>
            <person name="Sun J."/>
            <person name="Taheri-Talesh N."/>
            <person name="Takeshita N."/>
            <person name="Ussery D."/>
            <person name="vanKuyk P.A."/>
            <person name="Visser H."/>
            <person name="van de Vondervoort P.J."/>
            <person name="de Vries R.P."/>
            <person name="Walton J."/>
            <person name="Xiang X."/>
            <person name="Xiong Y."/>
            <person name="Zeng A.P."/>
            <person name="Brandt B.W."/>
            <person name="Cornell M.J."/>
            <person name="van den Hondel C.A."/>
            <person name="Visser J."/>
            <person name="Oliver S.G."/>
            <person name="Turner G."/>
        </authorList>
    </citation>
    <scope>GENOME REANNOTATION</scope>
    <source>
        <strain>FGSC A4 / ATCC 38163 / CBS 112.46 / NRRL 194 / M139</strain>
    </source>
</reference>
<accession>Q5B6U3</accession>
<accession>C8V7B2</accession>
<organism>
    <name type="scientific">Emericella nidulans (strain FGSC A4 / ATCC 38163 / CBS 112.46 / NRRL 194 / M139)</name>
    <name type="common">Aspergillus nidulans</name>
    <dbReference type="NCBI Taxonomy" id="227321"/>
    <lineage>
        <taxon>Eukaryota</taxon>
        <taxon>Fungi</taxon>
        <taxon>Dikarya</taxon>
        <taxon>Ascomycota</taxon>
        <taxon>Pezizomycotina</taxon>
        <taxon>Eurotiomycetes</taxon>
        <taxon>Eurotiomycetidae</taxon>
        <taxon>Eurotiales</taxon>
        <taxon>Aspergillaceae</taxon>
        <taxon>Aspergillus</taxon>
        <taxon>Aspergillus subgen. Nidulantes</taxon>
    </lineage>
</organism>
<proteinExistence type="inferred from homology"/>
<name>CMR1_EMENI</name>
<keyword id="KW-0227">DNA damage</keyword>
<keyword id="KW-0238">DNA-binding</keyword>
<keyword id="KW-1185">Reference proteome</keyword>
<keyword id="KW-0677">Repeat</keyword>
<keyword id="KW-0853">WD repeat</keyword>
<comment type="function">
    <text evidence="1">DNA-binding protein that binds to both single- and double-stranded DNA. Binds preferentially to UV-damaged DNA. May be involved in DNA-metabolic processes.</text>
</comment>
<comment type="similarity">
    <text evidence="4">Belongs to the WD repeat DDB2/WDR76 family.</text>
</comment>
<evidence type="ECO:0000250" key="1">
    <source>
        <dbReference type="UniProtKB" id="Q12510"/>
    </source>
</evidence>
<evidence type="ECO:0000255" key="2"/>
<evidence type="ECO:0000256" key="3">
    <source>
        <dbReference type="SAM" id="MobiDB-lite"/>
    </source>
</evidence>
<evidence type="ECO:0000305" key="4"/>
<feature type="chain" id="PRO_0000351108" description="DNA damage-binding protein cmr1">
    <location>
        <begin position="1"/>
        <end position="525"/>
    </location>
</feature>
<feature type="repeat" description="WD 1" evidence="2">
    <location>
        <begin position="182"/>
        <end position="223"/>
    </location>
</feature>
<feature type="repeat" description="WD 2" evidence="2">
    <location>
        <begin position="247"/>
        <end position="287"/>
    </location>
</feature>
<feature type="repeat" description="WD 3" evidence="2">
    <location>
        <begin position="339"/>
        <end position="379"/>
    </location>
</feature>
<feature type="repeat" description="WD 4" evidence="2">
    <location>
        <begin position="384"/>
        <end position="425"/>
    </location>
</feature>
<feature type="repeat" description="WD 5" evidence="2">
    <location>
        <begin position="448"/>
        <end position="491"/>
    </location>
</feature>
<feature type="repeat" description="WD 6" evidence="2">
    <location>
        <begin position="494"/>
        <end position="525"/>
    </location>
</feature>
<feature type="region of interest" description="Disordered" evidence="3">
    <location>
        <begin position="34"/>
        <end position="103"/>
    </location>
</feature>
<feature type="region of interest" description="Disordered" evidence="3">
    <location>
        <begin position="214"/>
        <end position="240"/>
    </location>
</feature>
<feature type="region of interest" description="Disordered" evidence="3">
    <location>
        <begin position="282"/>
        <end position="301"/>
    </location>
</feature>
<feature type="compositionally biased region" description="Polar residues" evidence="3">
    <location>
        <begin position="34"/>
        <end position="50"/>
    </location>
</feature>
<feature type="compositionally biased region" description="Basic and acidic residues" evidence="3">
    <location>
        <begin position="83"/>
        <end position="102"/>
    </location>
</feature>
<feature type="compositionally biased region" description="Acidic residues" evidence="3">
    <location>
        <begin position="227"/>
        <end position="239"/>
    </location>
</feature>
<protein>
    <recommendedName>
        <fullName evidence="1">DNA damage-binding protein cmr1</fullName>
    </recommendedName>
</protein>